<keyword id="KW-1185">Reference proteome</keyword>
<dbReference type="EMBL" id="D50617">
    <property type="protein sequence ID" value="BAA09219.1"/>
    <property type="molecule type" value="Genomic_DNA"/>
</dbReference>
<dbReference type="EMBL" id="Z46255">
    <property type="protein sequence ID" value="CAA86355.1"/>
    <property type="molecule type" value="Genomic_DNA"/>
</dbReference>
<dbReference type="EMBL" id="BK006940">
    <property type="protein sequence ID" value="DAA80292.1"/>
    <property type="molecule type" value="Genomic_DNA"/>
</dbReference>
<dbReference type="PIR" id="S48324">
    <property type="entry name" value="S48324"/>
</dbReference>
<dbReference type="RefSeq" id="NP_001335772.1">
    <property type="nucleotide sequence ID" value="NM_001348831.1"/>
</dbReference>
<dbReference type="FunCoup" id="P43576">
    <property type="interactions" value="11"/>
</dbReference>
<dbReference type="PaxDb" id="4932-YFL019C"/>
<dbReference type="TopDownProteomics" id="P43576"/>
<dbReference type="EnsemblFungi" id="YFL019C_mRNA">
    <property type="protein sequence ID" value="YFL019C"/>
    <property type="gene ID" value="YFL019C"/>
</dbReference>
<dbReference type="GeneID" id="850525"/>
<dbReference type="AGR" id="SGD:S000001875"/>
<dbReference type="SGD" id="S000001875">
    <property type="gene designation" value="YFL019C"/>
</dbReference>
<dbReference type="HOGENOM" id="CLU_2110828_0_0_1"/>
<dbReference type="InParanoid" id="P43576"/>
<dbReference type="PRO" id="PR:P43576"/>
<dbReference type="Proteomes" id="UP000002311">
    <property type="component" value="Chromosome VI"/>
</dbReference>
<dbReference type="RNAct" id="P43576">
    <property type="molecule type" value="protein"/>
</dbReference>
<gene>
    <name type="ordered locus">YFL019C</name>
</gene>
<accession>P43576</accession>
<accession>A0A1S0T071</accession>
<feature type="chain" id="PRO_0000202677" description="Uncharacterized protein YFL019C">
    <location>
        <begin position="1"/>
        <end position="117"/>
    </location>
</feature>
<proteinExistence type="predicted"/>
<protein>
    <recommendedName>
        <fullName>Uncharacterized protein YFL019C</fullName>
    </recommendedName>
</protein>
<reference key="1">
    <citation type="journal article" date="1995" name="Nat. Genet.">
        <title>Analysis of the nucleotide sequence of chromosome VI from Saccharomyces cerevisiae.</title>
        <authorList>
            <person name="Murakami Y."/>
            <person name="Naitou M."/>
            <person name="Hagiwara H."/>
            <person name="Shibata T."/>
            <person name="Ozawa M."/>
            <person name="Sasanuma S."/>
            <person name="Sasanuma M."/>
            <person name="Tsuchiya Y."/>
            <person name="Soeda E."/>
            <person name="Yokoyama K."/>
            <person name="Yamazaki M."/>
            <person name="Tashiro H."/>
            <person name="Eki T."/>
        </authorList>
    </citation>
    <scope>NUCLEOTIDE SEQUENCE [LARGE SCALE GENOMIC DNA]</scope>
    <source>
        <strain>ATCC 204508 / S288c</strain>
    </source>
</reference>
<reference key="2">
    <citation type="journal article" date="2014" name="G3 (Bethesda)">
        <title>The reference genome sequence of Saccharomyces cerevisiae: Then and now.</title>
        <authorList>
            <person name="Engel S.R."/>
            <person name="Dietrich F.S."/>
            <person name="Fisk D.G."/>
            <person name="Binkley G."/>
            <person name="Balakrishnan R."/>
            <person name="Costanzo M.C."/>
            <person name="Dwight S.S."/>
            <person name="Hitz B.C."/>
            <person name="Karra K."/>
            <person name="Nash R.S."/>
            <person name="Weng S."/>
            <person name="Wong E.D."/>
            <person name="Lloyd P."/>
            <person name="Skrzypek M.S."/>
            <person name="Miyasato S.R."/>
            <person name="Simison M."/>
            <person name="Cherry J.M."/>
        </authorList>
    </citation>
    <scope>GENOME REANNOTATION</scope>
    <source>
        <strain>ATCC 204508 / S288c</strain>
    </source>
</reference>
<reference key="3">
    <citation type="submission" date="1994-09" db="EMBL/GenBank/DDBJ databases">
        <authorList>
            <person name="Barrell B.G."/>
            <person name="Churcher C."/>
            <person name="Rajandream M.A."/>
        </authorList>
    </citation>
    <scope>NUCLEOTIDE SEQUENCE [GENOMIC DNA]</scope>
    <source>
        <strain>ATCC 204511 / S288c / AB972</strain>
    </source>
</reference>
<sequence>MIVELYSNIIEVRRYTTKDSLCSIFESGSTSHFEINQLQVKRLNLLQNQFASVFTSFHPKDNTKGIHINFFSPVTRITDLQYSFFYTNQILFGTRYLIKMIQNFVTGKVFTRTNQSK</sequence>
<name>YFB9_YEAST</name>
<organism>
    <name type="scientific">Saccharomyces cerevisiae (strain ATCC 204508 / S288c)</name>
    <name type="common">Baker's yeast</name>
    <dbReference type="NCBI Taxonomy" id="559292"/>
    <lineage>
        <taxon>Eukaryota</taxon>
        <taxon>Fungi</taxon>
        <taxon>Dikarya</taxon>
        <taxon>Ascomycota</taxon>
        <taxon>Saccharomycotina</taxon>
        <taxon>Saccharomycetes</taxon>
        <taxon>Saccharomycetales</taxon>
        <taxon>Saccharomycetaceae</taxon>
        <taxon>Saccharomyces</taxon>
    </lineage>
</organism>